<evidence type="ECO:0000255" key="1">
    <source>
        <dbReference type="HAMAP-Rule" id="MF_00123"/>
    </source>
</evidence>
<organism>
    <name type="scientific">Psychrobacter cryohalolentis (strain ATCC BAA-1226 / DSM 17306 / VKM B-2378 / K5)</name>
    <dbReference type="NCBI Taxonomy" id="335284"/>
    <lineage>
        <taxon>Bacteria</taxon>
        <taxon>Pseudomonadati</taxon>
        <taxon>Pseudomonadota</taxon>
        <taxon>Gammaproteobacteria</taxon>
        <taxon>Moraxellales</taxon>
        <taxon>Moraxellaceae</taxon>
        <taxon>Psychrobacter</taxon>
    </lineage>
</organism>
<dbReference type="EC" id="6.1.1.19" evidence="1"/>
<dbReference type="EMBL" id="CP000323">
    <property type="protein sequence ID" value="ABE76016.1"/>
    <property type="molecule type" value="Genomic_DNA"/>
</dbReference>
<dbReference type="RefSeq" id="WP_011514549.1">
    <property type="nucleotide sequence ID" value="NC_007969.1"/>
</dbReference>
<dbReference type="SMR" id="Q1Q8I7"/>
<dbReference type="STRING" id="335284.Pcryo_2239"/>
<dbReference type="KEGG" id="pcr:Pcryo_2239"/>
<dbReference type="eggNOG" id="COG0018">
    <property type="taxonomic scope" value="Bacteria"/>
</dbReference>
<dbReference type="HOGENOM" id="CLU_006406_0_1_6"/>
<dbReference type="Proteomes" id="UP000002425">
    <property type="component" value="Chromosome"/>
</dbReference>
<dbReference type="GO" id="GO:0005737">
    <property type="term" value="C:cytoplasm"/>
    <property type="evidence" value="ECO:0007669"/>
    <property type="project" value="UniProtKB-SubCell"/>
</dbReference>
<dbReference type="GO" id="GO:0004814">
    <property type="term" value="F:arginine-tRNA ligase activity"/>
    <property type="evidence" value="ECO:0007669"/>
    <property type="project" value="UniProtKB-UniRule"/>
</dbReference>
<dbReference type="GO" id="GO:0005524">
    <property type="term" value="F:ATP binding"/>
    <property type="evidence" value="ECO:0007669"/>
    <property type="project" value="UniProtKB-UniRule"/>
</dbReference>
<dbReference type="GO" id="GO:0006420">
    <property type="term" value="P:arginyl-tRNA aminoacylation"/>
    <property type="evidence" value="ECO:0007669"/>
    <property type="project" value="UniProtKB-UniRule"/>
</dbReference>
<dbReference type="CDD" id="cd00671">
    <property type="entry name" value="ArgRS_core"/>
    <property type="match status" value="1"/>
</dbReference>
<dbReference type="Gene3D" id="3.30.1360.70">
    <property type="entry name" value="Arginyl tRNA synthetase N-terminal domain"/>
    <property type="match status" value="1"/>
</dbReference>
<dbReference type="Gene3D" id="3.40.50.620">
    <property type="entry name" value="HUPs"/>
    <property type="match status" value="1"/>
</dbReference>
<dbReference type="Gene3D" id="1.10.730.10">
    <property type="entry name" value="Isoleucyl-tRNA Synthetase, Domain 1"/>
    <property type="match status" value="1"/>
</dbReference>
<dbReference type="HAMAP" id="MF_00123">
    <property type="entry name" value="Arg_tRNA_synth"/>
    <property type="match status" value="1"/>
</dbReference>
<dbReference type="InterPro" id="IPR001278">
    <property type="entry name" value="Arg-tRNA-ligase"/>
</dbReference>
<dbReference type="InterPro" id="IPR005148">
    <property type="entry name" value="Arg-tRNA-synth_N"/>
</dbReference>
<dbReference type="InterPro" id="IPR036695">
    <property type="entry name" value="Arg-tRNA-synth_N_sf"/>
</dbReference>
<dbReference type="InterPro" id="IPR035684">
    <property type="entry name" value="ArgRS_core"/>
</dbReference>
<dbReference type="InterPro" id="IPR008909">
    <property type="entry name" value="DALR_anticod-bd"/>
</dbReference>
<dbReference type="InterPro" id="IPR014729">
    <property type="entry name" value="Rossmann-like_a/b/a_fold"/>
</dbReference>
<dbReference type="InterPro" id="IPR009080">
    <property type="entry name" value="tRNAsynth_Ia_anticodon-bd"/>
</dbReference>
<dbReference type="NCBIfam" id="TIGR00456">
    <property type="entry name" value="argS"/>
    <property type="match status" value="1"/>
</dbReference>
<dbReference type="PANTHER" id="PTHR11956:SF5">
    <property type="entry name" value="ARGININE--TRNA LIGASE, CYTOPLASMIC"/>
    <property type="match status" value="1"/>
</dbReference>
<dbReference type="PANTHER" id="PTHR11956">
    <property type="entry name" value="ARGINYL-TRNA SYNTHETASE"/>
    <property type="match status" value="1"/>
</dbReference>
<dbReference type="Pfam" id="PF03485">
    <property type="entry name" value="Arg_tRNA_synt_N"/>
    <property type="match status" value="1"/>
</dbReference>
<dbReference type="Pfam" id="PF05746">
    <property type="entry name" value="DALR_1"/>
    <property type="match status" value="1"/>
</dbReference>
<dbReference type="Pfam" id="PF00750">
    <property type="entry name" value="tRNA-synt_1d"/>
    <property type="match status" value="2"/>
</dbReference>
<dbReference type="PRINTS" id="PR01038">
    <property type="entry name" value="TRNASYNTHARG"/>
</dbReference>
<dbReference type="SMART" id="SM01016">
    <property type="entry name" value="Arg_tRNA_synt_N"/>
    <property type="match status" value="1"/>
</dbReference>
<dbReference type="SMART" id="SM00836">
    <property type="entry name" value="DALR_1"/>
    <property type="match status" value="1"/>
</dbReference>
<dbReference type="SUPFAM" id="SSF47323">
    <property type="entry name" value="Anticodon-binding domain of a subclass of class I aminoacyl-tRNA synthetases"/>
    <property type="match status" value="1"/>
</dbReference>
<dbReference type="SUPFAM" id="SSF55190">
    <property type="entry name" value="Arginyl-tRNA synthetase (ArgRS), N-terminal 'additional' domain"/>
    <property type="match status" value="1"/>
</dbReference>
<dbReference type="SUPFAM" id="SSF52374">
    <property type="entry name" value="Nucleotidylyl transferase"/>
    <property type="match status" value="1"/>
</dbReference>
<sequence length="609" mass="67402">MSQAQIDTLTSLFDSAIAVLKNDGELPADWQNNSQITRTKDTSHGDFASNIALTAAKAAKANPRQVAEKIVNALPENQDIRQIEIAGPGFINVFLNTEAKFAVLDDIFNLQNGFGLSKQFDGQKIQVEFVSANPTSSLHVGHGRGAAFGMSVSNLLEAIGYDVTREYYVNDAGRQMDILATSTYLRYLETNGETVTFPVNGYQGDYVSDIAQTLKTQHADTYVHRFADIAENVPEDAQFEINADGEKVLLSGDKEAHIDGLIANSKALLGNGYELFLNAALSSILADIKDDLNDFGVSYECWFSERSIDSEIEPVLQILEDKGYLYEKDGNIWFKSTDFGDEKDRVVRRANGQSTYFASDIAYHKNKFDRGFDKVVNVWGADHHGYVPRVKAALLALGIDADRLDVVLVQFVALWRGDEKVQMSSRSGKFVTLRELRHEVGNDAARFYYVARKPEVHVDFDLELAKSQSKDNLVYYIQYAHARVCRVLEKLETSGLSVDDAIGAAQQELLVAPSEEELIKLLAAYPATLMRSATGYEPHILTNYLKELAALFHGWYDSNRILPVSLTSGETPSADEMAMMQARLRLSKAVRQVISNGLGLLGLSAPSSM</sequence>
<gene>
    <name evidence="1" type="primary">argS</name>
    <name type="ordered locus">Pcryo_2239</name>
</gene>
<proteinExistence type="inferred from homology"/>
<feature type="chain" id="PRO_0000242074" description="Arginine--tRNA ligase">
    <location>
        <begin position="1"/>
        <end position="609"/>
    </location>
</feature>
<feature type="short sequence motif" description="'HIGH' region">
    <location>
        <begin position="132"/>
        <end position="142"/>
    </location>
</feature>
<comment type="catalytic activity">
    <reaction evidence="1">
        <text>tRNA(Arg) + L-arginine + ATP = L-arginyl-tRNA(Arg) + AMP + diphosphate</text>
        <dbReference type="Rhea" id="RHEA:20301"/>
        <dbReference type="Rhea" id="RHEA-COMP:9658"/>
        <dbReference type="Rhea" id="RHEA-COMP:9673"/>
        <dbReference type="ChEBI" id="CHEBI:30616"/>
        <dbReference type="ChEBI" id="CHEBI:32682"/>
        <dbReference type="ChEBI" id="CHEBI:33019"/>
        <dbReference type="ChEBI" id="CHEBI:78442"/>
        <dbReference type="ChEBI" id="CHEBI:78513"/>
        <dbReference type="ChEBI" id="CHEBI:456215"/>
        <dbReference type="EC" id="6.1.1.19"/>
    </reaction>
</comment>
<comment type="subunit">
    <text evidence="1">Monomer.</text>
</comment>
<comment type="subcellular location">
    <subcellularLocation>
        <location evidence="1">Cytoplasm</location>
    </subcellularLocation>
</comment>
<comment type="similarity">
    <text evidence="1">Belongs to the class-I aminoacyl-tRNA synthetase family.</text>
</comment>
<protein>
    <recommendedName>
        <fullName evidence="1">Arginine--tRNA ligase</fullName>
        <ecNumber evidence="1">6.1.1.19</ecNumber>
    </recommendedName>
    <alternativeName>
        <fullName evidence="1">Arginyl-tRNA synthetase</fullName>
        <shortName evidence="1">ArgRS</shortName>
    </alternativeName>
</protein>
<keyword id="KW-0030">Aminoacyl-tRNA synthetase</keyword>
<keyword id="KW-0067">ATP-binding</keyword>
<keyword id="KW-0963">Cytoplasm</keyword>
<keyword id="KW-0436">Ligase</keyword>
<keyword id="KW-0547">Nucleotide-binding</keyword>
<keyword id="KW-0648">Protein biosynthesis</keyword>
<reference key="1">
    <citation type="submission" date="2006-03" db="EMBL/GenBank/DDBJ databases">
        <title>Complete sequence of chromosome of Psychrobacter cryohalolentis K5.</title>
        <authorList>
            <consortium name="US DOE Joint Genome Institute"/>
            <person name="Copeland A."/>
            <person name="Lucas S."/>
            <person name="Lapidus A."/>
            <person name="Barry K."/>
            <person name="Detter J.C."/>
            <person name="Glavina T."/>
            <person name="Hammon N."/>
            <person name="Israni S."/>
            <person name="Dalin E."/>
            <person name="Tice H."/>
            <person name="Pitluck S."/>
            <person name="Brettin T."/>
            <person name="Bruce D."/>
            <person name="Han C."/>
            <person name="Tapia R."/>
            <person name="Sims D.R."/>
            <person name="Gilna P."/>
            <person name="Schmutz J."/>
            <person name="Larimer F."/>
            <person name="Land M."/>
            <person name="Hauser L."/>
            <person name="Kyrpides N."/>
            <person name="Kim E."/>
            <person name="Richardson P."/>
        </authorList>
    </citation>
    <scope>NUCLEOTIDE SEQUENCE [LARGE SCALE GENOMIC DNA]</scope>
    <source>
        <strain>ATCC BAA-1226 / DSM 17306 / VKM B-2378 / K5</strain>
    </source>
</reference>
<accession>Q1Q8I7</accession>
<name>SYR_PSYCK</name>